<name>LSM12_XENTR</name>
<feature type="chain" id="PRO_0000305133" description="Protein LSM12">
    <location>
        <begin position="1"/>
        <end position="194"/>
    </location>
</feature>
<feature type="domain" description="Sm" evidence="3">
    <location>
        <begin position="1"/>
        <end position="71"/>
    </location>
</feature>
<feature type="domain" description="AD" evidence="2">
    <location>
        <begin position="79"/>
        <end position="173"/>
    </location>
</feature>
<feature type="region of interest" description="Disordered" evidence="4">
    <location>
        <begin position="173"/>
        <end position="194"/>
    </location>
</feature>
<feature type="compositionally biased region" description="Polar residues" evidence="4">
    <location>
        <begin position="176"/>
        <end position="194"/>
    </location>
</feature>
<feature type="sequence conflict" description="In Ref. 1; AAH91003." evidence="5" ref="1">
    <original>A</original>
    <variation>V</variation>
    <location>
        <position position="139"/>
    </location>
</feature>
<organism>
    <name type="scientific">Xenopus tropicalis</name>
    <name type="common">Western clawed frog</name>
    <name type="synonym">Silurana tropicalis</name>
    <dbReference type="NCBI Taxonomy" id="8364"/>
    <lineage>
        <taxon>Eukaryota</taxon>
        <taxon>Metazoa</taxon>
        <taxon>Chordata</taxon>
        <taxon>Craniata</taxon>
        <taxon>Vertebrata</taxon>
        <taxon>Euteleostomi</taxon>
        <taxon>Amphibia</taxon>
        <taxon>Batrachia</taxon>
        <taxon>Anura</taxon>
        <taxon>Pipoidea</taxon>
        <taxon>Pipidae</taxon>
        <taxon>Xenopodinae</taxon>
        <taxon>Xenopus</taxon>
        <taxon>Silurana</taxon>
    </lineage>
</organism>
<comment type="function">
    <text evidence="1">Nicotinic acid adenine dinucleotide phosphate (NAADP) binding protein.</text>
</comment>
<comment type="subcellular location">
    <subcellularLocation>
        <location evidence="1">Cytoplasm</location>
    </subcellularLocation>
</comment>
<comment type="similarity">
    <text evidence="5">Belongs to the LSM12 family.</text>
</comment>
<comment type="sequence caution" evidence="5">
    <conflict type="frameshift">
        <sequence resource="EMBL-CDS" id="AAH61398"/>
    </conflict>
</comment>
<comment type="sequence caution" evidence="5">
    <conflict type="frameshift">
        <sequence resource="EMBL-CDS" id="AAH91003"/>
    </conflict>
</comment>
<keyword id="KW-0963">Cytoplasm</keyword>
<keyword id="KW-1185">Reference proteome</keyword>
<protein>
    <recommendedName>
        <fullName>Protein LSM12</fullName>
    </recommendedName>
</protein>
<proteinExistence type="evidence at transcript level"/>
<sequence>MAGPGEYFAIGAYVSCRTCQETRLQGEVVAFDYPSKMLALKCPSSSGKPNHADILLLNLDYVSDVEVINERTQTPPPLASLNITKLASRARLEKEEKLSQAYAISAGVSLDGQQLFQTIHKTIKDCKWQEKNIVVMEEAVISPPYQVENCKGKEGRALCHVCKIVEKHFIDMENQKGVQRNPAQQSQKETSTSS</sequence>
<gene>
    <name type="primary">lsm12</name>
</gene>
<evidence type="ECO:0000250" key="1">
    <source>
        <dbReference type="UniProtKB" id="Q3MHD2"/>
    </source>
</evidence>
<evidence type="ECO:0000255" key="2">
    <source>
        <dbReference type="PROSITE-ProRule" id="PRU01345"/>
    </source>
</evidence>
<evidence type="ECO:0000255" key="3">
    <source>
        <dbReference type="PROSITE-ProRule" id="PRU01346"/>
    </source>
</evidence>
<evidence type="ECO:0000256" key="4">
    <source>
        <dbReference type="SAM" id="MobiDB-lite"/>
    </source>
</evidence>
<evidence type="ECO:0000305" key="5"/>
<accession>Q6P833</accession>
<accession>Q5BKN9</accession>
<reference key="1">
    <citation type="submission" date="2003-11" db="EMBL/GenBank/DDBJ databases">
        <authorList>
            <consortium name="NIH - Xenopus Gene Collection (XGC) project"/>
        </authorList>
    </citation>
    <scope>NUCLEOTIDE SEQUENCE [LARGE SCALE MRNA]</scope>
    <source>
        <tissue>Embryo</tissue>
    </source>
</reference>
<dbReference type="EMBL" id="BC061398">
    <property type="protein sequence ID" value="AAH61398.1"/>
    <property type="status" value="ALT_FRAME"/>
    <property type="molecule type" value="mRNA"/>
</dbReference>
<dbReference type="EMBL" id="BC091003">
    <property type="protein sequence ID" value="AAH91003.1"/>
    <property type="status" value="ALT_FRAME"/>
    <property type="molecule type" value="mRNA"/>
</dbReference>
<dbReference type="RefSeq" id="NP_001032344.1">
    <property type="nucleotide sequence ID" value="NM_001037267.1"/>
</dbReference>
<dbReference type="FunCoup" id="Q6P833">
    <property type="interactions" value="1456"/>
</dbReference>
<dbReference type="STRING" id="8364.ENSXETP00000026873"/>
<dbReference type="DNASU" id="394627"/>
<dbReference type="GeneID" id="394627"/>
<dbReference type="KEGG" id="xtr:394627"/>
<dbReference type="CTD" id="124801"/>
<dbReference type="InParanoid" id="Q6P833"/>
<dbReference type="OrthoDB" id="1057137at2759"/>
<dbReference type="Proteomes" id="UP000008143">
    <property type="component" value="Chromosome 10"/>
</dbReference>
<dbReference type="GO" id="GO:0005737">
    <property type="term" value="C:cytoplasm"/>
    <property type="evidence" value="ECO:0000250"/>
    <property type="project" value="UniProtKB"/>
</dbReference>
<dbReference type="GO" id="GO:0003723">
    <property type="term" value="F:RNA binding"/>
    <property type="evidence" value="ECO:0007669"/>
    <property type="project" value="InterPro"/>
</dbReference>
<dbReference type="CDD" id="cd01735">
    <property type="entry name" value="LSm12_N"/>
    <property type="match status" value="1"/>
</dbReference>
<dbReference type="InterPro" id="IPR047574">
    <property type="entry name" value="AD"/>
</dbReference>
<dbReference type="InterPro" id="IPR039683">
    <property type="entry name" value="Lsm12-like"/>
</dbReference>
<dbReference type="InterPro" id="IPR019181">
    <property type="entry name" value="LSM12_ABD"/>
</dbReference>
<dbReference type="InterPro" id="IPR048478">
    <property type="entry name" value="LSM12_LSM"/>
</dbReference>
<dbReference type="InterPro" id="IPR047575">
    <property type="entry name" value="Sm"/>
</dbReference>
<dbReference type="PANTHER" id="PTHR13542">
    <property type="entry name" value="LSM12 HOMOLOG"/>
    <property type="match status" value="1"/>
</dbReference>
<dbReference type="Pfam" id="PF09793">
    <property type="entry name" value="AD"/>
    <property type="match status" value="1"/>
</dbReference>
<dbReference type="Pfam" id="PF21166">
    <property type="entry name" value="LSM12_LSM"/>
    <property type="match status" value="1"/>
</dbReference>
<dbReference type="SMART" id="SM00995">
    <property type="entry name" value="AD"/>
    <property type="match status" value="1"/>
</dbReference>
<dbReference type="PROSITE" id="PS52001">
    <property type="entry name" value="AD"/>
    <property type="match status" value="1"/>
</dbReference>
<dbReference type="PROSITE" id="PS52002">
    <property type="entry name" value="SM"/>
    <property type="match status" value="1"/>
</dbReference>